<feature type="chain" id="PRO_0000208308" description="Glutamyl-Q tRNA(Asp) synthetase">
    <location>
        <begin position="1"/>
        <end position="295"/>
    </location>
</feature>
<feature type="short sequence motif" description="'HIGH' region">
    <location>
        <begin position="8"/>
        <end position="18"/>
    </location>
</feature>
<feature type="short sequence motif" description="'KMSKS' region">
    <location>
        <begin position="234"/>
        <end position="238"/>
    </location>
</feature>
<feature type="binding site" evidence="1">
    <location>
        <begin position="5"/>
        <end position="9"/>
    </location>
    <ligand>
        <name>L-glutamate</name>
        <dbReference type="ChEBI" id="CHEBI:29985"/>
    </ligand>
</feature>
<feature type="binding site" evidence="1">
    <location>
        <position position="41"/>
    </location>
    <ligand>
        <name>L-glutamate</name>
        <dbReference type="ChEBI" id="CHEBI:29985"/>
    </ligand>
</feature>
<feature type="binding site" evidence="1">
    <location>
        <position position="97"/>
    </location>
    <ligand>
        <name>Zn(2+)</name>
        <dbReference type="ChEBI" id="CHEBI:29105"/>
    </ligand>
</feature>
<feature type="binding site" evidence="1">
    <location>
        <position position="99"/>
    </location>
    <ligand>
        <name>Zn(2+)</name>
        <dbReference type="ChEBI" id="CHEBI:29105"/>
    </ligand>
</feature>
<feature type="binding site" evidence="1">
    <location>
        <position position="117"/>
    </location>
    <ligand>
        <name>Zn(2+)</name>
        <dbReference type="ChEBI" id="CHEBI:29105"/>
    </ligand>
</feature>
<feature type="binding site" evidence="1">
    <location>
        <position position="121"/>
    </location>
    <ligand>
        <name>Zn(2+)</name>
        <dbReference type="ChEBI" id="CHEBI:29105"/>
    </ligand>
</feature>
<feature type="binding site" evidence="1">
    <location>
        <position position="178"/>
    </location>
    <ligand>
        <name>L-glutamate</name>
        <dbReference type="ChEBI" id="CHEBI:29985"/>
    </ligand>
</feature>
<feature type="binding site" evidence="1">
    <location>
        <position position="196"/>
    </location>
    <ligand>
        <name>L-glutamate</name>
        <dbReference type="ChEBI" id="CHEBI:29985"/>
    </ligand>
</feature>
<feature type="binding site" evidence="1">
    <location>
        <position position="237"/>
    </location>
    <ligand>
        <name>ATP</name>
        <dbReference type="ChEBI" id="CHEBI:30616"/>
    </ligand>
</feature>
<gene>
    <name evidence="1" type="primary">gluQ</name>
    <name type="ordered locus">NMB0349</name>
</gene>
<comment type="function">
    <text evidence="1">Catalyzes the tRNA-independent activation of glutamate in presence of ATP and the subsequent transfer of glutamate onto a tRNA(Asp). Glutamate is transferred on the 2-amino-5-(4,5-dihydroxy-2-cyclopenten-1-yl) moiety of the queuosine in the wobble position of the QUC anticodon.</text>
</comment>
<comment type="cofactor">
    <cofactor evidence="1">
        <name>Zn(2+)</name>
        <dbReference type="ChEBI" id="CHEBI:29105"/>
    </cofactor>
    <text evidence="1">Binds 1 zinc ion per subunit.</text>
</comment>
<comment type="similarity">
    <text evidence="1">Belongs to the class-I aminoacyl-tRNA synthetase family. GluQ subfamily.</text>
</comment>
<organism>
    <name type="scientific">Neisseria meningitidis serogroup B (strain ATCC BAA-335 / MC58)</name>
    <dbReference type="NCBI Taxonomy" id="122586"/>
    <lineage>
        <taxon>Bacteria</taxon>
        <taxon>Pseudomonadati</taxon>
        <taxon>Pseudomonadota</taxon>
        <taxon>Betaproteobacteria</taxon>
        <taxon>Neisseriales</taxon>
        <taxon>Neisseriaceae</taxon>
        <taxon>Neisseria</taxon>
    </lineage>
</organism>
<dbReference type="EC" id="6.1.1.-" evidence="1"/>
<dbReference type="EMBL" id="AE002098">
    <property type="protein sequence ID" value="AAF40792.1"/>
    <property type="molecule type" value="Genomic_DNA"/>
</dbReference>
<dbReference type="PIR" id="C81210">
    <property type="entry name" value="C81210"/>
</dbReference>
<dbReference type="RefSeq" id="NP_273398.1">
    <property type="nucleotide sequence ID" value="NC_003112.2"/>
</dbReference>
<dbReference type="SMR" id="Q9K141"/>
<dbReference type="FunCoup" id="Q9K141">
    <property type="interactions" value="37"/>
</dbReference>
<dbReference type="STRING" id="122586.NMB0349"/>
<dbReference type="PaxDb" id="122586-NMB0349"/>
<dbReference type="KEGG" id="nme:NMB0349"/>
<dbReference type="PATRIC" id="fig|122586.8.peg.441"/>
<dbReference type="HOGENOM" id="CLU_015768_0_1_4"/>
<dbReference type="InParanoid" id="Q9K141"/>
<dbReference type="OrthoDB" id="9807503at2"/>
<dbReference type="Proteomes" id="UP000000425">
    <property type="component" value="Chromosome"/>
</dbReference>
<dbReference type="GO" id="GO:0005829">
    <property type="term" value="C:cytosol"/>
    <property type="evidence" value="ECO:0000318"/>
    <property type="project" value="GO_Central"/>
</dbReference>
<dbReference type="GO" id="GO:0005524">
    <property type="term" value="F:ATP binding"/>
    <property type="evidence" value="ECO:0007669"/>
    <property type="project" value="UniProtKB-KW"/>
</dbReference>
<dbReference type="GO" id="GO:0004818">
    <property type="term" value="F:glutamate-tRNA ligase activity"/>
    <property type="evidence" value="ECO:0000318"/>
    <property type="project" value="GO_Central"/>
</dbReference>
<dbReference type="GO" id="GO:0008270">
    <property type="term" value="F:zinc ion binding"/>
    <property type="evidence" value="ECO:0007669"/>
    <property type="project" value="UniProtKB-UniRule"/>
</dbReference>
<dbReference type="GO" id="GO:0006424">
    <property type="term" value="P:glutamyl-tRNA aminoacylation"/>
    <property type="evidence" value="ECO:0000318"/>
    <property type="project" value="GO_Central"/>
</dbReference>
<dbReference type="GO" id="GO:0006400">
    <property type="term" value="P:tRNA modification"/>
    <property type="evidence" value="ECO:0007669"/>
    <property type="project" value="InterPro"/>
</dbReference>
<dbReference type="FunFam" id="3.40.50.620:FF:000093">
    <property type="entry name" value="Glutamyl-Q tRNA(Asp) synthetase"/>
    <property type="match status" value="1"/>
</dbReference>
<dbReference type="Gene3D" id="3.40.50.620">
    <property type="entry name" value="HUPs"/>
    <property type="match status" value="1"/>
</dbReference>
<dbReference type="HAMAP" id="MF_01428">
    <property type="entry name" value="Glu_Q_tRNA_synth"/>
    <property type="match status" value="1"/>
</dbReference>
<dbReference type="InterPro" id="IPR022380">
    <property type="entry name" value="Glu-Q_tRNA(Asp)_Synthase"/>
</dbReference>
<dbReference type="InterPro" id="IPR000924">
    <property type="entry name" value="Glu/Gln-tRNA-synth"/>
</dbReference>
<dbReference type="InterPro" id="IPR020058">
    <property type="entry name" value="Glu/Gln-tRNA-synth_Ib_cat-dom"/>
</dbReference>
<dbReference type="InterPro" id="IPR049940">
    <property type="entry name" value="GluQ/Sye"/>
</dbReference>
<dbReference type="InterPro" id="IPR014729">
    <property type="entry name" value="Rossmann-like_a/b/a_fold"/>
</dbReference>
<dbReference type="NCBIfam" id="NF004314">
    <property type="entry name" value="PRK05710.1-3"/>
    <property type="match status" value="1"/>
</dbReference>
<dbReference type="NCBIfam" id="TIGR03838">
    <property type="entry name" value="queuosine_YadB"/>
    <property type="match status" value="1"/>
</dbReference>
<dbReference type="PANTHER" id="PTHR43311">
    <property type="entry name" value="GLUTAMATE--TRNA LIGASE"/>
    <property type="match status" value="1"/>
</dbReference>
<dbReference type="PANTHER" id="PTHR43311:SF1">
    <property type="entry name" value="GLUTAMYL-Q TRNA(ASP) SYNTHETASE"/>
    <property type="match status" value="1"/>
</dbReference>
<dbReference type="Pfam" id="PF00749">
    <property type="entry name" value="tRNA-synt_1c"/>
    <property type="match status" value="1"/>
</dbReference>
<dbReference type="PRINTS" id="PR00987">
    <property type="entry name" value="TRNASYNTHGLU"/>
</dbReference>
<dbReference type="SUPFAM" id="SSF52374">
    <property type="entry name" value="Nucleotidylyl transferase"/>
    <property type="match status" value="1"/>
</dbReference>
<evidence type="ECO:0000255" key="1">
    <source>
        <dbReference type="HAMAP-Rule" id="MF_01428"/>
    </source>
</evidence>
<keyword id="KW-0030">Aminoacyl-tRNA synthetase</keyword>
<keyword id="KW-0067">ATP-binding</keyword>
<keyword id="KW-0436">Ligase</keyword>
<keyword id="KW-0479">Metal-binding</keyword>
<keyword id="KW-0547">Nucleotide-binding</keyword>
<keyword id="KW-1185">Reference proteome</keyword>
<keyword id="KW-0862">Zinc</keyword>
<protein>
    <recommendedName>
        <fullName evidence="1">Glutamyl-Q tRNA(Asp) synthetase</fullName>
        <shortName evidence="1">Glu-Q-RSs</shortName>
        <ecNumber evidence="1">6.1.1.-</ecNumber>
    </recommendedName>
</protein>
<name>GLUQ_NEIMB</name>
<reference key="1">
    <citation type="journal article" date="2000" name="Science">
        <title>Complete genome sequence of Neisseria meningitidis serogroup B strain MC58.</title>
        <authorList>
            <person name="Tettelin H."/>
            <person name="Saunders N.J."/>
            <person name="Heidelberg J.F."/>
            <person name="Jeffries A.C."/>
            <person name="Nelson K.E."/>
            <person name="Eisen J.A."/>
            <person name="Ketchum K.A."/>
            <person name="Hood D.W."/>
            <person name="Peden J.F."/>
            <person name="Dodson R.J."/>
            <person name="Nelson W.C."/>
            <person name="Gwinn M.L."/>
            <person name="DeBoy R.T."/>
            <person name="Peterson J.D."/>
            <person name="Hickey E.K."/>
            <person name="Haft D.H."/>
            <person name="Salzberg S.L."/>
            <person name="White O."/>
            <person name="Fleischmann R.D."/>
            <person name="Dougherty B.A."/>
            <person name="Mason T.M."/>
            <person name="Ciecko A."/>
            <person name="Parksey D.S."/>
            <person name="Blair E."/>
            <person name="Cittone H."/>
            <person name="Clark E.B."/>
            <person name="Cotton M.D."/>
            <person name="Utterback T.R."/>
            <person name="Khouri H.M."/>
            <person name="Qin H."/>
            <person name="Vamathevan J.J."/>
            <person name="Gill J."/>
            <person name="Scarlato V."/>
            <person name="Masignani V."/>
            <person name="Pizza M."/>
            <person name="Grandi G."/>
            <person name="Sun L."/>
            <person name="Smith H.O."/>
            <person name="Fraser C.M."/>
            <person name="Moxon E.R."/>
            <person name="Rappuoli R."/>
            <person name="Venter J.C."/>
        </authorList>
    </citation>
    <scope>NUCLEOTIDE SEQUENCE [LARGE SCALE GENOMIC DNA]</scope>
    <source>
        <strain>ATCC BAA-335 / MC58</strain>
    </source>
</reference>
<proteinExistence type="inferred from homology"/>
<accession>Q9K141</accession>
<sequence length="295" mass="33121">MYTGRFAPSPTGLLHIGSLLTAVASYADARAHGGKWLIRMEDLDPPREMPGAASHILHTLEAFGFEWDGEVAYQSRRYALYEETLCRLKTAGLVYPCHCSRKDWQAGARRGADGFVYNGRCRHPGQRPALQGKQPAWRIRVPDRIIGFSDGIVGGYAQNLARDIGDFVLLRADGYWAYQLAVVADDAEQGVTHIVRGQDLLVSTPRQIYLQQCLDVPTPQYAHLPLLTNAQGQKWSKQTLAPALDLNRREQLLRQVFRYLKLPEAPETDRPAELLDWAVAHWDMDKVPKHAVTAP</sequence>